<protein>
    <recommendedName>
        <fullName>NADH dehydrogenase-like protein Rv1812c</fullName>
        <ecNumber>1.6.-.-</ecNumber>
    </recommendedName>
</protein>
<evidence type="ECO:0000250" key="1"/>
<evidence type="ECO:0000269" key="2">
    <source>
    </source>
</evidence>
<evidence type="ECO:0000269" key="3">
    <source>
    </source>
</evidence>
<evidence type="ECO:0000305" key="4"/>
<name>Y1812_MYCTU</name>
<reference key="1">
    <citation type="journal article" date="1998" name="Nature">
        <title>Deciphering the biology of Mycobacterium tuberculosis from the complete genome sequence.</title>
        <authorList>
            <person name="Cole S.T."/>
            <person name="Brosch R."/>
            <person name="Parkhill J."/>
            <person name="Garnier T."/>
            <person name="Churcher C.M."/>
            <person name="Harris D.E."/>
            <person name="Gordon S.V."/>
            <person name="Eiglmeier K."/>
            <person name="Gas S."/>
            <person name="Barry C.E. III"/>
            <person name="Tekaia F."/>
            <person name="Badcock K."/>
            <person name="Basham D."/>
            <person name="Brown D."/>
            <person name="Chillingworth T."/>
            <person name="Connor R."/>
            <person name="Davies R.M."/>
            <person name="Devlin K."/>
            <person name="Feltwell T."/>
            <person name="Gentles S."/>
            <person name="Hamlin N."/>
            <person name="Holroyd S."/>
            <person name="Hornsby T."/>
            <person name="Jagels K."/>
            <person name="Krogh A."/>
            <person name="McLean J."/>
            <person name="Moule S."/>
            <person name="Murphy L.D."/>
            <person name="Oliver S."/>
            <person name="Osborne J."/>
            <person name="Quail M.A."/>
            <person name="Rajandream M.A."/>
            <person name="Rogers J."/>
            <person name="Rutter S."/>
            <person name="Seeger K."/>
            <person name="Skelton S."/>
            <person name="Squares S."/>
            <person name="Squares R."/>
            <person name="Sulston J.E."/>
            <person name="Taylor K."/>
            <person name="Whitehead S."/>
            <person name="Barrell B.G."/>
        </authorList>
    </citation>
    <scope>NUCLEOTIDE SEQUENCE [LARGE SCALE GENOMIC DNA]</scope>
    <source>
        <strain>ATCC 25618 / H37Rv</strain>
    </source>
</reference>
<reference key="2">
    <citation type="journal article" date="2003" name="J. Exp. Med.">
        <title>Inhibition of respiration by nitric oxide induces a Mycobacterium tuberculosis dormancy program.</title>
        <authorList>
            <person name="Voskuil M.I."/>
            <person name="Schnappinger D."/>
            <person name="Visconti K.C."/>
            <person name="Harrell M.I."/>
            <person name="Dolganov G.M."/>
            <person name="Sherman D.R."/>
            <person name="Schoolnik G.K."/>
        </authorList>
    </citation>
    <scope>INDUCTION BY NITRIC OXIDE (NO) AND BY HYPOXIA</scope>
    <scope>DORMANCY REGULON</scope>
    <source>
        <strain>ATCC 25618 / H37Rv</strain>
    </source>
</reference>
<reference key="3">
    <citation type="journal article" date="2008" name="J. Biol. Chem.">
        <title>Heme oxygenase-1-derived carbon monoxide induces the Mycobacterium tuberculosis dormancy regulon.</title>
        <authorList>
            <person name="Kumar A."/>
            <person name="Deshane J.S."/>
            <person name="Crossman D.K."/>
            <person name="Bolisetty S."/>
            <person name="Yan B.S."/>
            <person name="Kramnik I."/>
            <person name="Agarwal A."/>
            <person name="Steyn A.J."/>
        </authorList>
    </citation>
    <scope>INDUCTION BY CARBON MONOXIDE (CO)</scope>
    <scope>DORMANCY REGULON</scope>
    <source>
        <strain>ATCC 25618 / H37Rv</strain>
    </source>
</reference>
<reference key="4">
    <citation type="journal article" date="2011" name="Mol. Cell. Proteomics">
        <title>Proteogenomic analysis of Mycobacterium tuberculosis by high resolution mass spectrometry.</title>
        <authorList>
            <person name="Kelkar D.S."/>
            <person name="Kumar D."/>
            <person name="Kumar P."/>
            <person name="Balakrishnan L."/>
            <person name="Muthusamy B."/>
            <person name="Yadav A.K."/>
            <person name="Shrivastava P."/>
            <person name="Marimuthu A."/>
            <person name="Anand S."/>
            <person name="Sundaram H."/>
            <person name="Kingsbury R."/>
            <person name="Harsha H.C."/>
            <person name="Nair B."/>
            <person name="Prasad T.S."/>
            <person name="Chauhan D.S."/>
            <person name="Katoch K."/>
            <person name="Katoch V.M."/>
            <person name="Kumar P."/>
            <person name="Chaerkady R."/>
            <person name="Ramachandran S."/>
            <person name="Dash D."/>
            <person name="Pandey A."/>
        </authorList>
    </citation>
    <scope>IDENTIFICATION BY MASS SPECTROMETRY [LARGE SCALE ANALYSIS]</scope>
    <source>
        <strain>ATCC 25618 / H37Rv</strain>
    </source>
</reference>
<organism>
    <name type="scientific">Mycobacterium tuberculosis (strain ATCC 25618 / H37Rv)</name>
    <dbReference type="NCBI Taxonomy" id="83332"/>
    <lineage>
        <taxon>Bacteria</taxon>
        <taxon>Bacillati</taxon>
        <taxon>Actinomycetota</taxon>
        <taxon>Actinomycetes</taxon>
        <taxon>Mycobacteriales</taxon>
        <taxon>Mycobacteriaceae</taxon>
        <taxon>Mycobacterium</taxon>
        <taxon>Mycobacterium tuberculosis complex</taxon>
    </lineage>
</organism>
<gene>
    <name type="ordered locus">Rv1812c</name>
</gene>
<accession>P9WJJ1</accession>
<accession>L0T7Z1</accession>
<accession>O07220</accession>
<accession>Q8VJV9</accession>
<sequence length="400" mass="41956">MTRVVVIGSGFAGLWAALGAARRLDELAVLAGTVDVMVVSNKPFHDIRVRNYEADLSACRIPLGDVLGPAGVAHVTAEVTAIDADGRRVTTSTGASYSYDRLVLASGSHVVKPALPGLAEFGFDVDTYDGAVRLQQHLQGLAGGPLTSAAATVVVVGAGLTGIETACELPGRLHALFARGDGVTPRVVLIDHNPFVGSDMGLSARPVIEQALLDNGVETRTGVSVAAVSPGGVTLSSGERLAAATVVWCAGMRASRLTEQLPVARDRLGRLQVDDYLRVIGVPAMFAAGDVAAARMDDEHLSVMSCQHGRPMGRYAGCNVINDLFDQPLLALRIPWYVTVLDLGSAGAVYTEGWERKVVSQGAPAKTTKQSINTRRIYPPLNGSRADLLAAAAPRVQPRP</sequence>
<comment type="cofactor">
    <cofactor evidence="1">
        <name>FAD</name>
        <dbReference type="ChEBI" id="CHEBI:57692"/>
    </cofactor>
    <text evidence="1">Binds 1 FAD per subunit.</text>
</comment>
<comment type="induction">
    <text evidence="2 3">A member of the dormancy regulon. Induced in response to reduced oxygen tension (hypoxia), low levels of nitric oxide (NO) and carbon monoxide (CO). It is hoped that this regulon will give insight into the latent, or dormant phase of infection.</text>
</comment>
<comment type="similarity">
    <text evidence="4">Belongs to the NADH dehydrogenase family.</text>
</comment>
<keyword id="KW-0274">FAD</keyword>
<keyword id="KW-0285">Flavoprotein</keyword>
<keyword id="KW-0560">Oxidoreductase</keyword>
<keyword id="KW-1185">Reference proteome</keyword>
<proteinExistence type="evidence at protein level"/>
<dbReference type="EC" id="1.6.-.-"/>
<dbReference type="EMBL" id="AL123456">
    <property type="protein sequence ID" value="CCP44578.1"/>
    <property type="molecule type" value="Genomic_DNA"/>
</dbReference>
<dbReference type="PIR" id="F70982">
    <property type="entry name" value="F70982"/>
</dbReference>
<dbReference type="RefSeq" id="NP_216328.1">
    <property type="nucleotide sequence ID" value="NC_000962.3"/>
</dbReference>
<dbReference type="RefSeq" id="WP_003916895.1">
    <property type="nucleotide sequence ID" value="NZ_NVQJ01000070.1"/>
</dbReference>
<dbReference type="SMR" id="P9WJJ1"/>
<dbReference type="FunCoup" id="P9WJJ1">
    <property type="interactions" value="47"/>
</dbReference>
<dbReference type="STRING" id="83332.Rv1812c"/>
<dbReference type="PaxDb" id="83332-Rv1812c"/>
<dbReference type="DNASU" id="885487"/>
<dbReference type="GeneID" id="885487"/>
<dbReference type="KEGG" id="mtu:Rv1812c"/>
<dbReference type="KEGG" id="mtv:RVBD_1812c"/>
<dbReference type="TubercuList" id="Rv1812c"/>
<dbReference type="eggNOG" id="COG1252">
    <property type="taxonomic scope" value="Bacteria"/>
</dbReference>
<dbReference type="InParanoid" id="P9WJJ1"/>
<dbReference type="OrthoDB" id="9781621at2"/>
<dbReference type="PhylomeDB" id="P9WJJ1"/>
<dbReference type="Proteomes" id="UP000001584">
    <property type="component" value="Chromosome"/>
</dbReference>
<dbReference type="GO" id="GO:0005576">
    <property type="term" value="C:extracellular region"/>
    <property type="evidence" value="ECO:0007005"/>
    <property type="project" value="MTBBASE"/>
</dbReference>
<dbReference type="GO" id="GO:0005886">
    <property type="term" value="C:plasma membrane"/>
    <property type="evidence" value="ECO:0007005"/>
    <property type="project" value="MTBBASE"/>
</dbReference>
<dbReference type="GO" id="GO:0016491">
    <property type="term" value="F:oxidoreductase activity"/>
    <property type="evidence" value="ECO:0000318"/>
    <property type="project" value="GO_Central"/>
</dbReference>
<dbReference type="Gene3D" id="3.50.50.100">
    <property type="match status" value="1"/>
</dbReference>
<dbReference type="InterPro" id="IPR036188">
    <property type="entry name" value="FAD/NAD-bd_sf"/>
</dbReference>
<dbReference type="InterPro" id="IPR023753">
    <property type="entry name" value="FAD/NAD-binding_dom"/>
</dbReference>
<dbReference type="InterPro" id="IPR051169">
    <property type="entry name" value="NADH-Q_oxidoreductase"/>
</dbReference>
<dbReference type="PANTHER" id="PTHR42913:SF3">
    <property type="entry name" value="64 KDA MITOCHONDRIAL NADH DEHYDROGENASE (EUROFUNG)"/>
    <property type="match status" value="1"/>
</dbReference>
<dbReference type="PANTHER" id="PTHR42913">
    <property type="entry name" value="APOPTOSIS-INDUCING FACTOR 1"/>
    <property type="match status" value="1"/>
</dbReference>
<dbReference type="Pfam" id="PF07992">
    <property type="entry name" value="Pyr_redox_2"/>
    <property type="match status" value="1"/>
</dbReference>
<dbReference type="PRINTS" id="PR00368">
    <property type="entry name" value="FADPNR"/>
</dbReference>
<dbReference type="PRINTS" id="PR00469">
    <property type="entry name" value="PNDRDTASEII"/>
</dbReference>
<dbReference type="SUPFAM" id="SSF51905">
    <property type="entry name" value="FAD/NAD(P)-binding domain"/>
    <property type="match status" value="1"/>
</dbReference>
<feature type="chain" id="PRO_0000392911" description="NADH dehydrogenase-like protein Rv1812c">
    <location>
        <begin position="1"/>
        <end position="400"/>
    </location>
</feature>